<gene>
    <name evidence="1" type="primary">mmm1</name>
    <name type="ORF">pi076</name>
    <name type="ORF">SPBC27B12.01c</name>
</gene>
<keyword id="KW-0256">Endoplasmic reticulum</keyword>
<keyword id="KW-0445">Lipid transport</keyword>
<keyword id="KW-0446">Lipid-binding</keyword>
<keyword id="KW-0472">Membrane</keyword>
<keyword id="KW-1185">Reference proteome</keyword>
<keyword id="KW-0812">Transmembrane</keyword>
<keyword id="KW-1133">Transmembrane helix</keyword>
<keyword id="KW-0813">Transport</keyword>
<organism>
    <name type="scientific">Schizosaccharomyces pombe (strain 972 / ATCC 24843)</name>
    <name type="common">Fission yeast</name>
    <dbReference type="NCBI Taxonomy" id="284812"/>
    <lineage>
        <taxon>Eukaryota</taxon>
        <taxon>Fungi</taxon>
        <taxon>Dikarya</taxon>
        <taxon>Ascomycota</taxon>
        <taxon>Taphrinomycotina</taxon>
        <taxon>Schizosaccharomycetes</taxon>
        <taxon>Schizosaccharomycetales</taxon>
        <taxon>Schizosaccharomycetaceae</taxon>
        <taxon>Schizosaccharomyces</taxon>
    </lineage>
</organism>
<comment type="function">
    <text evidence="1">Component of the ERMES/MDM complex, which serves as a molecular tether to connect the endoplasmic reticulum (ER) and mitochondria. Components of this complex are involved in the control of mitochondrial shape and protein biogenesis, and function in nonvesicular lipid trafficking between the ER and mitochondria. The mdm12-mmm1 subcomplex functions in the major beta-barrel assembly pathway that is responsible for biogenesis of all outer membrane beta-barrel proteins, and acts in a late step after the SAM complex. The mdm10-mdm12-mmm1 subcomplex further acts in the TOM40-specific pathway after the action of the mdm12-mmm1 complex. Essential for establishing and maintaining the structure of mitochondria and maintenance of mtDNA nucleoids.</text>
</comment>
<comment type="subunit">
    <text evidence="1">Homodimer. Component of the ER-mitochondria encounter structure (ERMES) or MDM complex, composed of mmm1, mdm10, mdm12 and mdm34. A mmm1 homodimer associates with one molecule of mdm12 on each side in a pairwise head-to-tail manner, and the SMP-LTD domains of mmm1 and mdm12 generate a continuous hydrophobic tunnel for phospholipid trafficking.</text>
</comment>
<comment type="subcellular location">
    <subcellularLocation>
        <location evidence="1 3">Endoplasmic reticulum membrane</location>
        <topology evidence="1 3">Single-pass type I membrane protein</topology>
    </subcellularLocation>
    <text evidence="1">The ERMES/MDM complex localizes to a few discrete foci (around 10 per single cell), that represent mitochondria-endoplasmic reticulum junctions. These foci are often found next to mtDNA nucleoids.</text>
</comment>
<comment type="domain">
    <text evidence="1">The SMP-LTD domain is a barrel-like domain that can bind various types of glycerophospholipids in its interior and mediate their transfer between two adjacent bilayers.</text>
</comment>
<comment type="similarity">
    <text evidence="1">Belongs to the MMM1 family.</text>
</comment>
<comment type="sequence caution" evidence="4">
    <conflict type="erroneous gene model prediction">
        <sequence resource="EMBL-CDS" id="BAA21458"/>
    </conflict>
</comment>
<proteinExistence type="inferred from homology"/>
<name>MMM1_SCHPO</name>
<accession>O74368</accession>
<accession>O13667</accession>
<protein>
    <recommendedName>
        <fullName evidence="1">Maintenance of mitochondrial morphology protein 1</fullName>
    </recommendedName>
</protein>
<feature type="chain" id="PRO_0000372306" description="Maintenance of mitochondrial morphology protein 1">
    <location>
        <begin position="1"/>
        <end position="313"/>
    </location>
</feature>
<feature type="topological domain" description="Lumenal" evidence="1">
    <location>
        <begin position="1"/>
        <end position="12"/>
    </location>
</feature>
<feature type="transmembrane region" description="Helical" evidence="1">
    <location>
        <begin position="13"/>
        <end position="33"/>
    </location>
</feature>
<feature type="topological domain" description="Cytoplasmic" evidence="1">
    <location>
        <begin position="34"/>
        <end position="313"/>
    </location>
</feature>
<feature type="domain" description="SMP-LTD" evidence="1">
    <location>
        <begin position="90"/>
        <end position="288"/>
    </location>
</feature>
<feature type="region of interest" description="Disordered" evidence="2">
    <location>
        <begin position="42"/>
        <end position="65"/>
    </location>
</feature>
<feature type="compositionally biased region" description="Polar residues" evidence="2">
    <location>
        <begin position="42"/>
        <end position="63"/>
    </location>
</feature>
<reference key="1">
    <citation type="journal article" date="2000" name="Yeast">
        <title>A 38 kb segment containing the cdc2 gene from the left arm of fission yeast chromosome II: sequence analysis and characterization of the genomic DNA and cDNAs encoded on the segment.</title>
        <authorList>
            <person name="Machida M."/>
            <person name="Yamazaki S."/>
            <person name="Kunihiro S."/>
            <person name="Tanaka T."/>
            <person name="Kushida N."/>
            <person name="Jinno K."/>
            <person name="Haikawa Y."/>
            <person name="Yamazaki J."/>
            <person name="Yamamoto S."/>
            <person name="Sekine M."/>
            <person name="Oguchi A."/>
            <person name="Nagai Y."/>
            <person name="Sakai M."/>
            <person name="Aoki K."/>
            <person name="Ogura K."/>
            <person name="Kudoh Y."/>
            <person name="Kikuchi H."/>
            <person name="Zhang M.Q."/>
            <person name="Yanagida M."/>
        </authorList>
    </citation>
    <scope>NUCLEOTIDE SEQUENCE [GENOMIC DNA]</scope>
    <source>
        <strain>972 / ATCC 24843</strain>
    </source>
</reference>
<reference key="2">
    <citation type="journal article" date="2002" name="Nature">
        <title>The genome sequence of Schizosaccharomyces pombe.</title>
        <authorList>
            <person name="Wood V."/>
            <person name="Gwilliam R."/>
            <person name="Rajandream M.A."/>
            <person name="Lyne M.H."/>
            <person name="Lyne R."/>
            <person name="Stewart A."/>
            <person name="Sgouros J.G."/>
            <person name="Peat N."/>
            <person name="Hayles J."/>
            <person name="Baker S.G."/>
            <person name="Basham D."/>
            <person name="Bowman S."/>
            <person name="Brooks K."/>
            <person name="Brown D."/>
            <person name="Brown S."/>
            <person name="Chillingworth T."/>
            <person name="Churcher C.M."/>
            <person name="Collins M."/>
            <person name="Connor R."/>
            <person name="Cronin A."/>
            <person name="Davis P."/>
            <person name="Feltwell T."/>
            <person name="Fraser A."/>
            <person name="Gentles S."/>
            <person name="Goble A."/>
            <person name="Hamlin N."/>
            <person name="Harris D.E."/>
            <person name="Hidalgo J."/>
            <person name="Hodgson G."/>
            <person name="Holroyd S."/>
            <person name="Hornsby T."/>
            <person name="Howarth S."/>
            <person name="Huckle E.J."/>
            <person name="Hunt S."/>
            <person name="Jagels K."/>
            <person name="James K.D."/>
            <person name="Jones L."/>
            <person name="Jones M."/>
            <person name="Leather S."/>
            <person name="McDonald S."/>
            <person name="McLean J."/>
            <person name="Mooney P."/>
            <person name="Moule S."/>
            <person name="Mungall K.L."/>
            <person name="Murphy L.D."/>
            <person name="Niblett D."/>
            <person name="Odell C."/>
            <person name="Oliver K."/>
            <person name="O'Neil S."/>
            <person name="Pearson D."/>
            <person name="Quail M.A."/>
            <person name="Rabbinowitsch E."/>
            <person name="Rutherford K.M."/>
            <person name="Rutter S."/>
            <person name="Saunders D."/>
            <person name="Seeger K."/>
            <person name="Sharp S."/>
            <person name="Skelton J."/>
            <person name="Simmonds M.N."/>
            <person name="Squares R."/>
            <person name="Squares S."/>
            <person name="Stevens K."/>
            <person name="Taylor K."/>
            <person name="Taylor R.G."/>
            <person name="Tivey A."/>
            <person name="Walsh S.V."/>
            <person name="Warren T."/>
            <person name="Whitehead S."/>
            <person name="Woodward J.R."/>
            <person name="Volckaert G."/>
            <person name="Aert R."/>
            <person name="Robben J."/>
            <person name="Grymonprez B."/>
            <person name="Weltjens I."/>
            <person name="Vanstreels E."/>
            <person name="Rieger M."/>
            <person name="Schaefer M."/>
            <person name="Mueller-Auer S."/>
            <person name="Gabel C."/>
            <person name="Fuchs M."/>
            <person name="Duesterhoeft A."/>
            <person name="Fritzc C."/>
            <person name="Holzer E."/>
            <person name="Moestl D."/>
            <person name="Hilbert H."/>
            <person name="Borzym K."/>
            <person name="Langer I."/>
            <person name="Beck A."/>
            <person name="Lehrach H."/>
            <person name="Reinhardt R."/>
            <person name="Pohl T.M."/>
            <person name="Eger P."/>
            <person name="Zimmermann W."/>
            <person name="Wedler H."/>
            <person name="Wambutt R."/>
            <person name="Purnelle B."/>
            <person name="Goffeau A."/>
            <person name="Cadieu E."/>
            <person name="Dreano S."/>
            <person name="Gloux S."/>
            <person name="Lelaure V."/>
            <person name="Mottier S."/>
            <person name="Galibert F."/>
            <person name="Aves S.J."/>
            <person name="Xiang Z."/>
            <person name="Hunt C."/>
            <person name="Moore K."/>
            <person name="Hurst S.M."/>
            <person name="Lucas M."/>
            <person name="Rochet M."/>
            <person name="Gaillardin C."/>
            <person name="Tallada V.A."/>
            <person name="Garzon A."/>
            <person name="Thode G."/>
            <person name="Daga R.R."/>
            <person name="Cruzado L."/>
            <person name="Jimenez J."/>
            <person name="Sanchez M."/>
            <person name="del Rey F."/>
            <person name="Benito J."/>
            <person name="Dominguez A."/>
            <person name="Revuelta J.L."/>
            <person name="Moreno S."/>
            <person name="Armstrong J."/>
            <person name="Forsburg S.L."/>
            <person name="Cerutti L."/>
            <person name="Lowe T."/>
            <person name="McCombie W.R."/>
            <person name="Paulsen I."/>
            <person name="Potashkin J."/>
            <person name="Shpakovski G.V."/>
            <person name="Ussery D."/>
            <person name="Barrell B.G."/>
            <person name="Nurse P."/>
        </authorList>
    </citation>
    <scope>NUCLEOTIDE SEQUENCE [LARGE SCALE GENOMIC DNA]</scope>
    <source>
        <strain>972 / ATCC 24843</strain>
    </source>
</reference>
<reference key="3">
    <citation type="journal article" date="2011" name="Science">
        <title>Comparative functional genomics of the fission yeasts.</title>
        <authorList>
            <person name="Rhind N."/>
            <person name="Chen Z."/>
            <person name="Yassour M."/>
            <person name="Thompson D.A."/>
            <person name="Haas B.J."/>
            <person name="Habib N."/>
            <person name="Wapinski I."/>
            <person name="Roy S."/>
            <person name="Lin M.F."/>
            <person name="Heiman D.I."/>
            <person name="Young S.K."/>
            <person name="Furuya K."/>
            <person name="Guo Y."/>
            <person name="Pidoux A."/>
            <person name="Chen H.M."/>
            <person name="Robbertse B."/>
            <person name="Goldberg J.M."/>
            <person name="Aoki K."/>
            <person name="Bayne E.H."/>
            <person name="Berlin A.M."/>
            <person name="Desjardins C.A."/>
            <person name="Dobbs E."/>
            <person name="Dukaj L."/>
            <person name="Fan L."/>
            <person name="FitzGerald M.G."/>
            <person name="French C."/>
            <person name="Gujja S."/>
            <person name="Hansen K."/>
            <person name="Keifenheim D."/>
            <person name="Levin J.Z."/>
            <person name="Mosher R.A."/>
            <person name="Mueller C.A."/>
            <person name="Pfiffner J."/>
            <person name="Priest M."/>
            <person name="Russ C."/>
            <person name="Smialowska A."/>
            <person name="Swoboda P."/>
            <person name="Sykes S.M."/>
            <person name="Vaughn M."/>
            <person name="Vengrova S."/>
            <person name="Yoder R."/>
            <person name="Zeng Q."/>
            <person name="Allshire R."/>
            <person name="Baulcombe D."/>
            <person name="Birren B.W."/>
            <person name="Brown W."/>
            <person name="Ekwall K."/>
            <person name="Kellis M."/>
            <person name="Leatherwood J."/>
            <person name="Levin H."/>
            <person name="Margalit H."/>
            <person name="Martienssen R."/>
            <person name="Nieduszynski C.A."/>
            <person name="Spatafora J.W."/>
            <person name="Friedman N."/>
            <person name="Dalgaard J.Z."/>
            <person name="Baumann P."/>
            <person name="Niki H."/>
            <person name="Regev A."/>
            <person name="Nusbaum C."/>
        </authorList>
    </citation>
    <scope>REVISION OF GENE MODEL</scope>
</reference>
<reference key="4">
    <citation type="journal article" date="2006" name="Nat. Biotechnol.">
        <title>ORFeome cloning and global analysis of protein localization in the fission yeast Schizosaccharomyces pombe.</title>
        <authorList>
            <person name="Matsuyama A."/>
            <person name="Arai R."/>
            <person name="Yashiroda Y."/>
            <person name="Shirai A."/>
            <person name="Kamata A."/>
            <person name="Sekido S."/>
            <person name="Kobayashi Y."/>
            <person name="Hashimoto A."/>
            <person name="Hamamoto M."/>
            <person name="Hiraoka Y."/>
            <person name="Horinouchi S."/>
            <person name="Yoshida M."/>
        </authorList>
    </citation>
    <scope>SUBCELLULAR LOCATION [LARGE SCALE ANALYSIS]</scope>
</reference>
<evidence type="ECO:0000255" key="1">
    <source>
        <dbReference type="HAMAP-Rule" id="MF_03103"/>
    </source>
</evidence>
<evidence type="ECO:0000256" key="2">
    <source>
        <dbReference type="SAM" id="MobiDB-lite"/>
    </source>
</evidence>
<evidence type="ECO:0000269" key="3">
    <source>
    </source>
</evidence>
<evidence type="ECO:0000305" key="4"/>
<sequence>MIHLPQGSFTQGLIVGQLLTLAIIYVFLRFFLFCSPIPKSVANSPKQTGNETPDETPSTPLSNNKKRYKKPLTILEPHILNLLYDVNEHEPESLDWFNVLIAQALIQFRYDACSNDVALRKLETVLNKGAQDKSMVDHIYVRDLSLGDGFPVFSHCRVLPHQHNSSQLRAEMLVSLTDNINCTVDTKLLLNFPKPAFATLPLSITVRICKFVGKIMIYFSPSNGAGQPAYMNLSFDPNFVISLQVSSLVGARSKLQDIPKITQLIESRIRQWFTNRCVSPQFQQIAIPNLWPTSAKEGHARSHAPQEESSNED</sequence>
<dbReference type="EMBL" id="AB004539">
    <property type="protein sequence ID" value="BAA21458.1"/>
    <property type="status" value="ALT_SEQ"/>
    <property type="molecule type" value="Genomic_DNA"/>
</dbReference>
<dbReference type="EMBL" id="CU329671">
    <property type="protein sequence ID" value="CAA20322.3"/>
    <property type="molecule type" value="Genomic_DNA"/>
</dbReference>
<dbReference type="RefSeq" id="NP_595534.3">
    <property type="nucleotide sequence ID" value="NM_001021444.3"/>
</dbReference>
<dbReference type="SMR" id="O74368"/>
<dbReference type="BioGRID" id="276908">
    <property type="interactions" value="16"/>
</dbReference>
<dbReference type="FunCoup" id="O74368">
    <property type="interactions" value="113"/>
</dbReference>
<dbReference type="STRING" id="284812.O74368"/>
<dbReference type="iPTMnet" id="O74368"/>
<dbReference type="PaxDb" id="4896-SPBC27B12.01c.1"/>
<dbReference type="EnsemblFungi" id="SPBC27B12.01c.1">
    <property type="protein sequence ID" value="SPBC27B12.01c.1:pep"/>
    <property type="gene ID" value="SPBC27B12.01c"/>
</dbReference>
<dbReference type="GeneID" id="2540379"/>
<dbReference type="KEGG" id="spo:2540379"/>
<dbReference type="PomBase" id="SPBC27B12.01c">
    <property type="gene designation" value="mmm1"/>
</dbReference>
<dbReference type="VEuPathDB" id="FungiDB:SPBC27B12.01c"/>
<dbReference type="eggNOG" id="ENOG502QUUW">
    <property type="taxonomic scope" value="Eukaryota"/>
</dbReference>
<dbReference type="HOGENOM" id="CLU_032730_0_0_1"/>
<dbReference type="InParanoid" id="O74368"/>
<dbReference type="OMA" id="WSFTQGL"/>
<dbReference type="PRO" id="PR:O74368"/>
<dbReference type="Proteomes" id="UP000002485">
    <property type="component" value="Chromosome II"/>
</dbReference>
<dbReference type="GO" id="GO:0005737">
    <property type="term" value="C:cytoplasm"/>
    <property type="evidence" value="ECO:0007005"/>
    <property type="project" value="PomBase"/>
</dbReference>
<dbReference type="GO" id="GO:0005783">
    <property type="term" value="C:endoplasmic reticulum"/>
    <property type="evidence" value="ECO:0007005"/>
    <property type="project" value="PomBase"/>
</dbReference>
<dbReference type="GO" id="GO:0005789">
    <property type="term" value="C:endoplasmic reticulum membrane"/>
    <property type="evidence" value="ECO:0007669"/>
    <property type="project" value="UniProtKB-SubCell"/>
</dbReference>
<dbReference type="GO" id="GO:0032865">
    <property type="term" value="C:ERMES complex"/>
    <property type="evidence" value="ECO:0000318"/>
    <property type="project" value="GO_Central"/>
</dbReference>
<dbReference type="GO" id="GO:0008289">
    <property type="term" value="F:lipid binding"/>
    <property type="evidence" value="ECO:0000318"/>
    <property type="project" value="GO_Central"/>
</dbReference>
<dbReference type="GO" id="GO:0015917">
    <property type="term" value="P:aminophospholipid transport"/>
    <property type="evidence" value="ECO:0000318"/>
    <property type="project" value="GO_Central"/>
</dbReference>
<dbReference type="GO" id="GO:0120010">
    <property type="term" value="P:intermembrane phospholipid transfer"/>
    <property type="evidence" value="ECO:0000304"/>
    <property type="project" value="PomBase"/>
</dbReference>
<dbReference type="GO" id="GO:0000002">
    <property type="term" value="P:mitochondrial genome maintenance"/>
    <property type="evidence" value="ECO:0007669"/>
    <property type="project" value="UniProtKB-UniRule"/>
</dbReference>
<dbReference type="GO" id="GO:0007006">
    <property type="term" value="P:mitochondrial membrane organization"/>
    <property type="evidence" value="ECO:0000305"/>
    <property type="project" value="PomBase"/>
</dbReference>
<dbReference type="GO" id="GO:1990456">
    <property type="term" value="P:mitochondrion-endoplasmic reticulum membrane tethering"/>
    <property type="evidence" value="ECO:0000318"/>
    <property type="project" value="GO_Central"/>
</dbReference>
<dbReference type="GO" id="GO:0045040">
    <property type="term" value="P:protein insertion into mitochondrial outer membrane"/>
    <property type="evidence" value="ECO:0007669"/>
    <property type="project" value="UniProtKB-UniRule"/>
</dbReference>
<dbReference type="CDD" id="cd21671">
    <property type="entry name" value="SMP_Mmm1"/>
    <property type="match status" value="1"/>
</dbReference>
<dbReference type="HAMAP" id="MF_03103">
    <property type="entry name" value="Mmm1"/>
    <property type="match status" value="1"/>
</dbReference>
<dbReference type="InterPro" id="IPR027537">
    <property type="entry name" value="Mmm1"/>
</dbReference>
<dbReference type="InterPro" id="IPR019411">
    <property type="entry name" value="MMM1_dom"/>
</dbReference>
<dbReference type="InterPro" id="IPR031468">
    <property type="entry name" value="SMP_LBD"/>
</dbReference>
<dbReference type="PANTHER" id="PTHR13466:SF0">
    <property type="entry name" value="SMP-LTD DOMAIN-CONTAINING PROTEIN"/>
    <property type="match status" value="1"/>
</dbReference>
<dbReference type="PANTHER" id="PTHR13466">
    <property type="entry name" value="TEX2 PROTEIN-RELATED"/>
    <property type="match status" value="1"/>
</dbReference>
<dbReference type="Pfam" id="PF10296">
    <property type="entry name" value="MMM1"/>
    <property type="match status" value="1"/>
</dbReference>
<dbReference type="PROSITE" id="PS51847">
    <property type="entry name" value="SMP"/>
    <property type="match status" value="1"/>
</dbReference>